<feature type="chain" id="PRO_0000111975" description="ATP-dependent 6-phosphofructokinase">
    <location>
        <begin position="1"/>
        <end position="327"/>
    </location>
</feature>
<feature type="active site" description="Proton acceptor" evidence="1">
    <location>
        <position position="128"/>
    </location>
</feature>
<feature type="binding site" evidence="1">
    <location>
        <position position="12"/>
    </location>
    <ligand>
        <name>ATP</name>
        <dbReference type="ChEBI" id="CHEBI:30616"/>
    </ligand>
</feature>
<feature type="binding site" evidence="1">
    <location>
        <begin position="73"/>
        <end position="74"/>
    </location>
    <ligand>
        <name>ATP</name>
        <dbReference type="ChEBI" id="CHEBI:30616"/>
    </ligand>
</feature>
<feature type="binding site" evidence="1">
    <location>
        <begin position="103"/>
        <end position="106"/>
    </location>
    <ligand>
        <name>ATP</name>
        <dbReference type="ChEBI" id="CHEBI:30616"/>
    </ligand>
</feature>
<feature type="binding site" evidence="1">
    <location>
        <position position="104"/>
    </location>
    <ligand>
        <name>Mg(2+)</name>
        <dbReference type="ChEBI" id="CHEBI:18420"/>
        <note>catalytic</note>
    </ligand>
</feature>
<feature type="binding site" description="in other chain" evidence="1">
    <location>
        <begin position="126"/>
        <end position="128"/>
    </location>
    <ligand>
        <name>substrate</name>
        <note>ligand shared between dimeric partners</note>
    </ligand>
</feature>
<feature type="binding site" evidence="1">
    <location>
        <position position="155"/>
    </location>
    <ligand>
        <name>ADP</name>
        <dbReference type="ChEBI" id="CHEBI:456216"/>
        <note>allosteric activator</note>
    </ligand>
</feature>
<feature type="binding site" evidence="1">
    <location>
        <position position="163"/>
    </location>
    <ligand>
        <name>substrate</name>
        <note>ligand shared between dimeric partners</note>
    </ligand>
</feature>
<feature type="binding site" description="in other chain" evidence="1">
    <location>
        <begin position="170"/>
        <end position="172"/>
    </location>
    <ligand>
        <name>substrate</name>
        <note>ligand shared between dimeric partners</note>
    </ligand>
</feature>
<feature type="binding site" evidence="1">
    <location>
        <begin position="186"/>
        <end position="188"/>
    </location>
    <ligand>
        <name>ADP</name>
        <dbReference type="ChEBI" id="CHEBI:456216"/>
        <note>allosteric activator</note>
    </ligand>
</feature>
<feature type="binding site" evidence="1">
    <location>
        <begin position="214"/>
        <end position="216"/>
    </location>
    <ligand>
        <name>ADP</name>
        <dbReference type="ChEBI" id="CHEBI:456216"/>
        <note>allosteric activator</note>
    </ligand>
</feature>
<feature type="binding site" description="in other chain" evidence="1">
    <location>
        <position position="223"/>
    </location>
    <ligand>
        <name>substrate</name>
        <note>ligand shared between dimeric partners</note>
    </ligand>
</feature>
<feature type="binding site" evidence="1">
    <location>
        <position position="245"/>
    </location>
    <ligand>
        <name>substrate</name>
        <note>ligand shared between dimeric partners</note>
    </ligand>
</feature>
<feature type="binding site" description="in other chain" evidence="1">
    <location>
        <begin position="251"/>
        <end position="254"/>
    </location>
    <ligand>
        <name>substrate</name>
        <note>ligand shared between dimeric partners</note>
    </ligand>
</feature>
<dbReference type="EC" id="2.7.1.11" evidence="1"/>
<dbReference type="EMBL" id="AF012877">
    <property type="protein sequence ID" value="AAB69998.1"/>
    <property type="molecule type" value="Genomic_DNA"/>
</dbReference>
<dbReference type="PIR" id="E35270">
    <property type="entry name" value="E35270"/>
</dbReference>
<dbReference type="RefSeq" id="WP_071937534.1">
    <property type="nucleotide sequence ID" value="NZ_CP013197.1"/>
</dbReference>
<dbReference type="SMR" id="P20275"/>
<dbReference type="STRING" id="2133.SCITRI_001128"/>
<dbReference type="GeneID" id="54238989"/>
<dbReference type="OrthoDB" id="9802503at2"/>
<dbReference type="UniPathway" id="UPA00109">
    <property type="reaction ID" value="UER00182"/>
</dbReference>
<dbReference type="GO" id="GO:0005945">
    <property type="term" value="C:6-phosphofructokinase complex"/>
    <property type="evidence" value="ECO:0007669"/>
    <property type="project" value="TreeGrafter"/>
</dbReference>
<dbReference type="GO" id="GO:0003872">
    <property type="term" value="F:6-phosphofructokinase activity"/>
    <property type="evidence" value="ECO:0007669"/>
    <property type="project" value="UniProtKB-UniRule"/>
</dbReference>
<dbReference type="GO" id="GO:0016208">
    <property type="term" value="F:AMP binding"/>
    <property type="evidence" value="ECO:0007669"/>
    <property type="project" value="TreeGrafter"/>
</dbReference>
<dbReference type="GO" id="GO:0005524">
    <property type="term" value="F:ATP binding"/>
    <property type="evidence" value="ECO:0007669"/>
    <property type="project" value="UniProtKB-KW"/>
</dbReference>
<dbReference type="GO" id="GO:0070095">
    <property type="term" value="F:fructose-6-phosphate binding"/>
    <property type="evidence" value="ECO:0007669"/>
    <property type="project" value="TreeGrafter"/>
</dbReference>
<dbReference type="GO" id="GO:0042802">
    <property type="term" value="F:identical protein binding"/>
    <property type="evidence" value="ECO:0007669"/>
    <property type="project" value="TreeGrafter"/>
</dbReference>
<dbReference type="GO" id="GO:0046872">
    <property type="term" value="F:metal ion binding"/>
    <property type="evidence" value="ECO:0007669"/>
    <property type="project" value="UniProtKB-KW"/>
</dbReference>
<dbReference type="GO" id="GO:0048029">
    <property type="term" value="F:monosaccharide binding"/>
    <property type="evidence" value="ECO:0007669"/>
    <property type="project" value="TreeGrafter"/>
</dbReference>
<dbReference type="GO" id="GO:0061621">
    <property type="term" value="P:canonical glycolysis"/>
    <property type="evidence" value="ECO:0007669"/>
    <property type="project" value="TreeGrafter"/>
</dbReference>
<dbReference type="GO" id="GO:0030388">
    <property type="term" value="P:fructose 1,6-bisphosphate metabolic process"/>
    <property type="evidence" value="ECO:0007669"/>
    <property type="project" value="TreeGrafter"/>
</dbReference>
<dbReference type="GO" id="GO:0006002">
    <property type="term" value="P:fructose 6-phosphate metabolic process"/>
    <property type="evidence" value="ECO:0007669"/>
    <property type="project" value="InterPro"/>
</dbReference>
<dbReference type="CDD" id="cd00763">
    <property type="entry name" value="Bacterial_PFK"/>
    <property type="match status" value="1"/>
</dbReference>
<dbReference type="FunFam" id="3.40.50.460:FF:000002">
    <property type="entry name" value="ATP-dependent 6-phosphofructokinase"/>
    <property type="match status" value="1"/>
</dbReference>
<dbReference type="Gene3D" id="3.40.50.450">
    <property type="match status" value="1"/>
</dbReference>
<dbReference type="Gene3D" id="3.40.50.460">
    <property type="entry name" value="Phosphofructokinase domain"/>
    <property type="match status" value="1"/>
</dbReference>
<dbReference type="HAMAP" id="MF_00339">
    <property type="entry name" value="Phosphofructokinase_I_B1"/>
    <property type="match status" value="1"/>
</dbReference>
<dbReference type="InterPro" id="IPR022953">
    <property type="entry name" value="ATP_PFK"/>
</dbReference>
<dbReference type="InterPro" id="IPR012003">
    <property type="entry name" value="ATP_PFK_prok-type"/>
</dbReference>
<dbReference type="InterPro" id="IPR012828">
    <property type="entry name" value="PFKA_ATP_prok"/>
</dbReference>
<dbReference type="InterPro" id="IPR015912">
    <property type="entry name" value="Phosphofructokinase_CS"/>
</dbReference>
<dbReference type="InterPro" id="IPR000023">
    <property type="entry name" value="Phosphofructokinase_dom"/>
</dbReference>
<dbReference type="InterPro" id="IPR035966">
    <property type="entry name" value="PKF_sf"/>
</dbReference>
<dbReference type="NCBIfam" id="TIGR02482">
    <property type="entry name" value="PFKA_ATP"/>
    <property type="match status" value="1"/>
</dbReference>
<dbReference type="NCBIfam" id="NF002872">
    <property type="entry name" value="PRK03202.1"/>
    <property type="match status" value="1"/>
</dbReference>
<dbReference type="PANTHER" id="PTHR13697:SF4">
    <property type="entry name" value="ATP-DEPENDENT 6-PHOSPHOFRUCTOKINASE"/>
    <property type="match status" value="1"/>
</dbReference>
<dbReference type="PANTHER" id="PTHR13697">
    <property type="entry name" value="PHOSPHOFRUCTOKINASE"/>
    <property type="match status" value="1"/>
</dbReference>
<dbReference type="Pfam" id="PF00365">
    <property type="entry name" value="PFK"/>
    <property type="match status" value="1"/>
</dbReference>
<dbReference type="PIRSF" id="PIRSF000532">
    <property type="entry name" value="ATP_PFK_prok"/>
    <property type="match status" value="1"/>
</dbReference>
<dbReference type="PRINTS" id="PR00476">
    <property type="entry name" value="PHFRCTKINASE"/>
</dbReference>
<dbReference type="SUPFAM" id="SSF53784">
    <property type="entry name" value="Phosphofructokinase"/>
    <property type="match status" value="1"/>
</dbReference>
<dbReference type="PROSITE" id="PS00433">
    <property type="entry name" value="PHOSPHOFRUCTOKINASE"/>
    <property type="match status" value="1"/>
</dbReference>
<protein>
    <recommendedName>
        <fullName evidence="1">ATP-dependent 6-phosphofructokinase</fullName>
        <shortName evidence="1">ATP-PFK</shortName>
        <shortName evidence="1">Phosphofructokinase</shortName>
        <ecNumber evidence="1">2.7.1.11</ecNumber>
    </recommendedName>
    <alternativeName>
        <fullName evidence="1">Phosphohexokinase</fullName>
    </alternativeName>
</protein>
<evidence type="ECO:0000255" key="1">
    <source>
        <dbReference type="HAMAP-Rule" id="MF_00339"/>
    </source>
</evidence>
<proteinExistence type="inferred from homology"/>
<organism>
    <name type="scientific">Spiroplasma citri</name>
    <dbReference type="NCBI Taxonomy" id="2133"/>
    <lineage>
        <taxon>Bacteria</taxon>
        <taxon>Bacillati</taxon>
        <taxon>Mycoplasmatota</taxon>
        <taxon>Mollicutes</taxon>
        <taxon>Entomoplasmatales</taxon>
        <taxon>Spiroplasmataceae</taxon>
        <taxon>Spiroplasma</taxon>
    </lineage>
</organism>
<reference key="1">
    <citation type="journal article" date="1990" name="J. Bacteriol.">
        <title>Organization and nucleotide sequences of the Spiroplasma citri genes for ribosomal protein S2, elongation factor Ts, spiralin, phosphofructokinase, pyruvate kinase, and an unidentified protein.</title>
        <authorList>
            <person name="Chevalier C."/>
            <person name="Saillard C."/>
            <person name="Bove J.M."/>
        </authorList>
    </citation>
    <scope>NUCLEOTIDE SEQUENCE [GENOMIC DNA]</scope>
    <source>
        <strain>ATCC 27556 / NCPPB 2647 / R8A2</strain>
    </source>
</reference>
<reference key="2">
    <citation type="journal article" date="1998" name="Curr. Microbiol.">
        <title>Gene organization and transcriptional analysis of the Spiroplasma citri rpsB/tsf/x operon.</title>
        <authorList>
            <person name="Le Dantec L."/>
            <person name="Bove J.M."/>
            <person name="Saillard C."/>
        </authorList>
    </citation>
    <scope>NUCLEOTIDE SEQUENCE [GENOMIC DNA]</scope>
    <source>
        <strain>ATCC 27556 / NCPPB 2647 / R8A2</strain>
    </source>
</reference>
<accession>P20275</accession>
<gene>
    <name evidence="1" type="primary">pfkA</name>
</gene>
<sequence>MLKKIGILTSGGDSQGMNAAIAGVIKTAHAKGLETYIIRDGYLGLINNWIEVVDNNFADSIMLLGGTVIGSARLPEFKDPEVQKKAVDILKKQEIAALVVIGGDGSYQGAQRLTELGINCIALPGTIDNDITSSDYTIGFDTAINIVVEAIDRLRDTMQSHNRCSIVEVMGHACGDIALYAGIAGGADIISINEAALSETEIADRVAMLHQAQKRSVIVVVSEMIYPDVHKLAKLVESKSGYITRATVLGHTQRGGNPTAMDRYRAFQMAQFAVEQIIAGVGGLAIGNQGDQIIARPIMEALSIPRSSRKEIWAKFDQLNQNIYQKS</sequence>
<comment type="function">
    <text evidence="1">Catalyzes the phosphorylation of D-fructose 6-phosphate to fructose 1,6-bisphosphate by ATP, the first committing step of glycolysis.</text>
</comment>
<comment type="catalytic activity">
    <reaction evidence="1">
        <text>beta-D-fructose 6-phosphate + ATP = beta-D-fructose 1,6-bisphosphate + ADP + H(+)</text>
        <dbReference type="Rhea" id="RHEA:16109"/>
        <dbReference type="ChEBI" id="CHEBI:15378"/>
        <dbReference type="ChEBI" id="CHEBI:30616"/>
        <dbReference type="ChEBI" id="CHEBI:32966"/>
        <dbReference type="ChEBI" id="CHEBI:57634"/>
        <dbReference type="ChEBI" id="CHEBI:456216"/>
        <dbReference type="EC" id="2.7.1.11"/>
    </reaction>
</comment>
<comment type="cofactor">
    <cofactor evidence="1">
        <name>Mg(2+)</name>
        <dbReference type="ChEBI" id="CHEBI:18420"/>
    </cofactor>
</comment>
<comment type="activity regulation">
    <text evidence="1">Allosterically activated by ADP and other diphosphonucleosides, and allosterically inhibited by phosphoenolpyruvate.</text>
</comment>
<comment type="pathway">
    <text evidence="1">Carbohydrate degradation; glycolysis; D-glyceraldehyde 3-phosphate and glycerone phosphate from D-glucose: step 3/4.</text>
</comment>
<comment type="subunit">
    <text evidence="1">Homotetramer.</text>
</comment>
<comment type="subcellular location">
    <subcellularLocation>
        <location evidence="1">Cytoplasm</location>
    </subcellularLocation>
</comment>
<comment type="similarity">
    <text evidence="1">Belongs to the phosphofructokinase type A (PFKA) family. ATP-dependent PFK group I subfamily. Prokaryotic clade 'B1' sub-subfamily.</text>
</comment>
<name>PFKA_SPICI</name>
<keyword id="KW-0021">Allosteric enzyme</keyword>
<keyword id="KW-0067">ATP-binding</keyword>
<keyword id="KW-0963">Cytoplasm</keyword>
<keyword id="KW-0324">Glycolysis</keyword>
<keyword id="KW-0418">Kinase</keyword>
<keyword id="KW-0460">Magnesium</keyword>
<keyword id="KW-0479">Metal-binding</keyword>
<keyword id="KW-0547">Nucleotide-binding</keyword>
<keyword id="KW-0808">Transferase</keyword>